<gene>
    <name type="primary">HSP70A1</name>
    <name type="synonym">HSP70-13C-L</name>
</gene>
<reference key="1">
    <citation type="journal article" date="1993" name="Insect Mol. Biol.">
        <title>The Hsp70 heat-shock gene family of the mosquito Anopheles albimanus.</title>
        <authorList>
            <person name="Benedict M.Q."/>
            <person name="Cockburn A.F."/>
            <person name="Seawright J.A."/>
        </authorList>
    </citation>
    <scope>NUCLEOTIDE SEQUENCE [GENOMIC DNA]</scope>
</reference>
<feature type="chain" id="PRO_0000078325" description="Heat shock protein 70 A1">
    <location>
        <begin position="1"/>
        <end position="640"/>
    </location>
</feature>
<feature type="region of interest" description="Disordered" evidence="1">
    <location>
        <begin position="608"/>
        <end position="640"/>
    </location>
</feature>
<organism>
    <name type="scientific">Anopheles albimanus</name>
    <name type="common">New world malaria mosquito</name>
    <dbReference type="NCBI Taxonomy" id="7167"/>
    <lineage>
        <taxon>Eukaryota</taxon>
        <taxon>Metazoa</taxon>
        <taxon>Ecdysozoa</taxon>
        <taxon>Arthropoda</taxon>
        <taxon>Hexapoda</taxon>
        <taxon>Insecta</taxon>
        <taxon>Pterygota</taxon>
        <taxon>Neoptera</taxon>
        <taxon>Endopterygota</taxon>
        <taxon>Diptera</taxon>
        <taxon>Nematocera</taxon>
        <taxon>Culicoidea</taxon>
        <taxon>Culicidae</taxon>
        <taxon>Anophelinae</taxon>
        <taxon>Anopheles</taxon>
    </lineage>
</organism>
<accession>P41825</accession>
<dbReference type="EMBL" id="M96662">
    <property type="protein sequence ID" value="AAC41540.1"/>
    <property type="molecule type" value="Genomic_DNA"/>
</dbReference>
<dbReference type="SMR" id="P41825"/>
<dbReference type="STRING" id="7167.P41825"/>
<dbReference type="VEuPathDB" id="VectorBase:AALB016781"/>
<dbReference type="VEuPathDB" id="VectorBase:AALB20_035927"/>
<dbReference type="Proteomes" id="UP000069272">
    <property type="component" value="Unassembled WGS sequence"/>
</dbReference>
<dbReference type="GO" id="GO:0005524">
    <property type="term" value="F:ATP binding"/>
    <property type="evidence" value="ECO:0007669"/>
    <property type="project" value="UniProtKB-KW"/>
</dbReference>
<dbReference type="GO" id="GO:0140662">
    <property type="term" value="F:ATP-dependent protein folding chaperone"/>
    <property type="evidence" value="ECO:0007669"/>
    <property type="project" value="InterPro"/>
</dbReference>
<dbReference type="CDD" id="cd10233">
    <property type="entry name" value="ASKHA_NBD_HSP70_HSPA1"/>
    <property type="match status" value="1"/>
</dbReference>
<dbReference type="FunFam" id="2.60.34.10:FF:000002">
    <property type="entry name" value="Heat shock 70 kDa"/>
    <property type="match status" value="1"/>
</dbReference>
<dbReference type="FunFam" id="3.30.420.40:FF:000172">
    <property type="entry name" value="Heat shock 70 kDa protein"/>
    <property type="match status" value="1"/>
</dbReference>
<dbReference type="FunFam" id="3.90.640.10:FF:000058">
    <property type="entry name" value="Heat shock 70 kDa protein"/>
    <property type="match status" value="1"/>
</dbReference>
<dbReference type="FunFam" id="3.30.30.30:FF:000001">
    <property type="entry name" value="heat shock 70 kDa protein-like"/>
    <property type="match status" value="1"/>
</dbReference>
<dbReference type="FunFam" id="1.20.1270.10:FF:000024">
    <property type="entry name" value="Heat shock protein 70"/>
    <property type="match status" value="1"/>
</dbReference>
<dbReference type="FunFam" id="3.30.420.40:FF:000026">
    <property type="entry name" value="Heat shock protein 70"/>
    <property type="match status" value="1"/>
</dbReference>
<dbReference type="Gene3D" id="1.20.1270.10">
    <property type="match status" value="1"/>
</dbReference>
<dbReference type="Gene3D" id="3.30.30.30">
    <property type="match status" value="1"/>
</dbReference>
<dbReference type="Gene3D" id="3.30.420.40">
    <property type="match status" value="2"/>
</dbReference>
<dbReference type="Gene3D" id="3.90.640.10">
    <property type="entry name" value="Actin, Chain A, domain 4"/>
    <property type="match status" value="1"/>
</dbReference>
<dbReference type="Gene3D" id="2.60.34.10">
    <property type="entry name" value="Substrate Binding Domain Of DNAk, Chain A, domain 1"/>
    <property type="match status" value="1"/>
</dbReference>
<dbReference type="InterPro" id="IPR043129">
    <property type="entry name" value="ATPase_NBD"/>
</dbReference>
<dbReference type="InterPro" id="IPR018181">
    <property type="entry name" value="Heat_shock_70_CS"/>
</dbReference>
<dbReference type="InterPro" id="IPR029048">
    <property type="entry name" value="HSP70_C_sf"/>
</dbReference>
<dbReference type="InterPro" id="IPR029047">
    <property type="entry name" value="HSP70_peptide-bd_sf"/>
</dbReference>
<dbReference type="InterPro" id="IPR013126">
    <property type="entry name" value="Hsp_70_fam"/>
</dbReference>
<dbReference type="NCBIfam" id="NF001413">
    <property type="entry name" value="PRK00290.1"/>
    <property type="match status" value="1"/>
</dbReference>
<dbReference type="PANTHER" id="PTHR19375">
    <property type="entry name" value="HEAT SHOCK PROTEIN 70KDA"/>
    <property type="match status" value="1"/>
</dbReference>
<dbReference type="Pfam" id="PF00012">
    <property type="entry name" value="HSP70"/>
    <property type="match status" value="1"/>
</dbReference>
<dbReference type="PRINTS" id="PR00301">
    <property type="entry name" value="HEATSHOCK70"/>
</dbReference>
<dbReference type="SUPFAM" id="SSF53067">
    <property type="entry name" value="Actin-like ATPase domain"/>
    <property type="match status" value="2"/>
</dbReference>
<dbReference type="SUPFAM" id="SSF100934">
    <property type="entry name" value="Heat shock protein 70kD (HSP70), C-terminal subdomain"/>
    <property type="match status" value="1"/>
</dbReference>
<dbReference type="SUPFAM" id="SSF100920">
    <property type="entry name" value="Heat shock protein 70kD (HSP70), peptide-binding domain"/>
    <property type="match status" value="1"/>
</dbReference>
<dbReference type="PROSITE" id="PS00297">
    <property type="entry name" value="HSP70_1"/>
    <property type="match status" value="1"/>
</dbReference>
<dbReference type="PROSITE" id="PS00329">
    <property type="entry name" value="HSP70_2"/>
    <property type="match status" value="1"/>
</dbReference>
<dbReference type="PROSITE" id="PS01036">
    <property type="entry name" value="HSP70_3"/>
    <property type="match status" value="1"/>
</dbReference>
<protein>
    <recommendedName>
        <fullName>Heat shock protein 70 A1</fullName>
    </recommendedName>
</protein>
<sequence>MPSAIGIDLGTTYSCVGVFQHGKVEIIANDQGNRTTPSYVAFSDTERLIGDAAKNQVAMNPTNTVFDAKRLIGRKFDDPKIQADMKHWPFTVVNDCGKPKIRVEFKGERKTFAPEEISSMVLTKMKETAEAYLGQSVKNAVITVPAYFNDSQRQATKDAGAIAGLNVMRIINEPTAAALAYGLDKNLKGERNVLIFDLGGGTFDVSILTIDEGSLFEVRATAGDTHLGGEDFDNRMVAHFVEEFKRKFKKDLSKNARALRRLRTACERAKRTLSSSTEATIEIDALMDGIDYYTKISRARFEELCSDLFRSTLQPVEKALSDAKMDKSSIHDIVLVGGSTRIPKVQSLLQNFFAGKSLNLSINPDEAVAYGAAVQAAILSGDKDDKIQDVLLVDVAPLSLGIETAGGVMTKLIERNSRIPCKQTKIFSTYADNQPGVSIQVFEGERAMTKDNNLLGQFDLSGIPPAPRGVPQIEVTFDLDANGILNVAAKDKSSGKEKNITIKNDKGRLSQADIDRMVSEAEKYREEDEKQREAIAARNQLEAYCFNLKQSLDGEGSSKLSEADRRTVQDRCDETLRWIDGNTMAEKEEYEHQMQELSRVCSPIMTKLHQQAAGGPQPTSCGQQAGGFGGRTGPTVEEVD</sequence>
<keyword id="KW-0067">ATP-binding</keyword>
<keyword id="KW-0547">Nucleotide-binding</keyword>
<keyword id="KW-0346">Stress response</keyword>
<evidence type="ECO:0000256" key="1">
    <source>
        <dbReference type="SAM" id="MobiDB-lite"/>
    </source>
</evidence>
<evidence type="ECO:0000305" key="2"/>
<comment type="similarity">
    <text evidence="2">Belongs to the heat shock protein 70 family.</text>
</comment>
<proteinExistence type="inferred from homology"/>
<name>HSP71_ANOAL</name>